<gene>
    <name type="primary">mxra8</name>
</gene>
<feature type="signal peptide" evidence="2">
    <location>
        <begin position="1"/>
        <end position="22"/>
    </location>
</feature>
<feature type="chain" id="PRO_0000298669" description="Matrix remodeling-associated protein 8">
    <location>
        <begin position="23"/>
        <end position="435"/>
    </location>
</feature>
<feature type="topological domain" description="Extracellular" evidence="2">
    <location>
        <begin position="23"/>
        <end position="337"/>
    </location>
</feature>
<feature type="transmembrane region" description="Helical" evidence="2">
    <location>
        <begin position="338"/>
        <end position="358"/>
    </location>
</feature>
<feature type="topological domain" description="Cytoplasmic" evidence="2">
    <location>
        <begin position="359"/>
        <end position="435"/>
    </location>
</feature>
<feature type="domain" description="Ig-like V-type 1">
    <location>
        <begin position="32"/>
        <end position="158"/>
    </location>
</feature>
<feature type="domain" description="Ig-like V-type 2">
    <location>
        <begin position="156"/>
        <end position="293"/>
    </location>
</feature>
<feature type="glycosylation site" description="N-linked (GlcNAc...) asparagine" evidence="2">
    <location>
        <position position="41"/>
    </location>
</feature>
<feature type="glycosylation site" description="N-linked (GlcNAc...) asparagine" evidence="2">
    <location>
        <position position="120"/>
    </location>
</feature>
<feature type="glycosylation site" description="N-linked (GlcNAc...) asparagine" evidence="2">
    <location>
        <position position="156"/>
    </location>
</feature>
<feature type="glycosylation site" description="N-linked (GlcNAc...) asparagine" evidence="2">
    <location>
        <position position="245"/>
    </location>
</feature>
<feature type="glycosylation site" description="N-linked (GlcNAc...) asparagine" evidence="2">
    <location>
        <position position="324"/>
    </location>
</feature>
<feature type="disulfide bond" evidence="3">
    <location>
        <begin position="54"/>
        <end position="138"/>
    </location>
</feature>
<feature type="disulfide bond" evidence="3">
    <location>
        <begin position="187"/>
        <end position="273"/>
    </location>
</feature>
<sequence length="435" mass="50880">MEIRCKVLVCHIILLHSATVYLYSVPASQQNPESVVVSVTNISTHVGDQGFLTCESYRMVWTQDNLMDRQRVVHWDLYNSQGVYRGERLLDMFSAGEQRIYKDYNQRRISVSESAFQDGNFSLVIKDVSMIDQGLYSCNLHHHYCHLDETVRVQLNITKSERKVKIYWDGEKIVIVALVHSTVLLPCENHDHMWTDRHREEDQQVVHWDRQAPGIPHDRADRLIDMYASGERRAYGSLFLRRKMNVSNSAFSQGDFTLFIPYLTRGDEGTYSCHLHHHYCGLHERRIFYLSVSDRPKTEEPSKTNSDSAPAIDSNVVQENKVINVTIQESRLHFFQQLGYILATLLLFILLLTAVILITRKHQKRGYAYNLNKPQGKEVNMQEICLRPPDLIQYKKEELRIDYKNNILKERAEMDRVFAPKNIDLDLELRKEYCK</sequence>
<evidence type="ECO:0000250" key="1">
    <source>
        <dbReference type="UniProtKB" id="Q9DBV4"/>
    </source>
</evidence>
<evidence type="ECO:0000255" key="2"/>
<evidence type="ECO:0000255" key="3">
    <source>
        <dbReference type="PROSITE-ProRule" id="PRU00114"/>
    </source>
</evidence>
<proteinExistence type="evidence at transcript level"/>
<protein>
    <recommendedName>
        <fullName>Matrix remodeling-associated protein 8</fullName>
    </recommendedName>
</protein>
<keyword id="KW-0130">Cell adhesion</keyword>
<keyword id="KW-1003">Cell membrane</keyword>
<keyword id="KW-1015">Disulfide bond</keyword>
<keyword id="KW-0325">Glycoprotein</keyword>
<keyword id="KW-0393">Immunoglobulin domain</keyword>
<keyword id="KW-0472">Membrane</keyword>
<keyword id="KW-1185">Reference proteome</keyword>
<keyword id="KW-0677">Repeat</keyword>
<keyword id="KW-0732">Signal</keyword>
<keyword id="KW-0812">Transmembrane</keyword>
<keyword id="KW-1133">Transmembrane helix</keyword>
<reference key="1">
    <citation type="submission" date="2003-08" db="EMBL/GenBank/DDBJ databases">
        <authorList>
            <consortium name="NIH - Xenopus Gene Collection (XGC) project"/>
        </authorList>
    </citation>
    <scope>NUCLEOTIDE SEQUENCE [LARGE SCALE MRNA]</scope>
    <source>
        <tissue>Spleen</tissue>
    </source>
</reference>
<organism>
    <name type="scientific">Xenopus laevis</name>
    <name type="common">African clawed frog</name>
    <dbReference type="NCBI Taxonomy" id="8355"/>
    <lineage>
        <taxon>Eukaryota</taxon>
        <taxon>Metazoa</taxon>
        <taxon>Chordata</taxon>
        <taxon>Craniata</taxon>
        <taxon>Vertebrata</taxon>
        <taxon>Euteleostomi</taxon>
        <taxon>Amphibia</taxon>
        <taxon>Batrachia</taxon>
        <taxon>Anura</taxon>
        <taxon>Pipoidea</taxon>
        <taxon>Pipidae</taxon>
        <taxon>Xenopodinae</taxon>
        <taxon>Xenopus</taxon>
        <taxon>Xenopus</taxon>
    </lineage>
</organism>
<dbReference type="EMBL" id="BC056081">
    <property type="protein sequence ID" value="AAH56081.1"/>
    <property type="molecule type" value="mRNA"/>
</dbReference>
<dbReference type="RefSeq" id="NP_001079875.1">
    <property type="nucleotide sequence ID" value="NM_001086406.1"/>
</dbReference>
<dbReference type="SMR" id="Q7T0R0"/>
<dbReference type="GlyCosmos" id="Q7T0R0">
    <property type="glycosylation" value="5 sites, No reported glycans"/>
</dbReference>
<dbReference type="DNASU" id="379565"/>
<dbReference type="GeneID" id="379565"/>
<dbReference type="KEGG" id="xla:379565"/>
<dbReference type="AGR" id="Xenbase:XB-GENE-921685"/>
<dbReference type="CTD" id="379565"/>
<dbReference type="Xenbase" id="XB-GENE-921685">
    <property type="gene designation" value="mxra8.S"/>
</dbReference>
<dbReference type="OMA" id="HWDVVHS"/>
<dbReference type="OrthoDB" id="9832369at2759"/>
<dbReference type="Proteomes" id="UP000186698">
    <property type="component" value="Chromosome 7S"/>
</dbReference>
<dbReference type="Bgee" id="379565">
    <property type="expression patterns" value="Expressed in lung and 15 other cell types or tissues"/>
</dbReference>
<dbReference type="GO" id="GO:0009986">
    <property type="term" value="C:cell surface"/>
    <property type="evidence" value="ECO:0000318"/>
    <property type="project" value="GO_Central"/>
</dbReference>
<dbReference type="GO" id="GO:0005886">
    <property type="term" value="C:plasma membrane"/>
    <property type="evidence" value="ECO:0007669"/>
    <property type="project" value="UniProtKB-SubCell"/>
</dbReference>
<dbReference type="GO" id="GO:0007155">
    <property type="term" value="P:cell adhesion"/>
    <property type="evidence" value="ECO:0007669"/>
    <property type="project" value="UniProtKB-KW"/>
</dbReference>
<dbReference type="GO" id="GO:0030154">
    <property type="term" value="P:cell differentiation"/>
    <property type="evidence" value="ECO:0000318"/>
    <property type="project" value="GO_Central"/>
</dbReference>
<dbReference type="Gene3D" id="2.60.40.10">
    <property type="entry name" value="Immunoglobulins"/>
    <property type="match status" value="2"/>
</dbReference>
<dbReference type="InterPro" id="IPR007110">
    <property type="entry name" value="Ig-like_dom"/>
</dbReference>
<dbReference type="InterPro" id="IPR036179">
    <property type="entry name" value="Ig-like_dom_sf"/>
</dbReference>
<dbReference type="InterPro" id="IPR013783">
    <property type="entry name" value="Ig-like_fold"/>
</dbReference>
<dbReference type="InterPro" id="IPR003599">
    <property type="entry name" value="Ig_sub"/>
</dbReference>
<dbReference type="InterPro" id="IPR013106">
    <property type="entry name" value="Ig_V-set"/>
</dbReference>
<dbReference type="InterPro" id="IPR042472">
    <property type="entry name" value="MXRA8"/>
</dbReference>
<dbReference type="PANTHER" id="PTHR44793">
    <property type="entry name" value="MATRIX REMODELING-ASSOCIATED PROTEIN 8"/>
    <property type="match status" value="1"/>
</dbReference>
<dbReference type="PANTHER" id="PTHR44793:SF1">
    <property type="entry name" value="MATRIX REMODELING-ASSOCIATED PROTEIN 8"/>
    <property type="match status" value="1"/>
</dbReference>
<dbReference type="Pfam" id="PF07686">
    <property type="entry name" value="V-set"/>
    <property type="match status" value="2"/>
</dbReference>
<dbReference type="SMART" id="SM00409">
    <property type="entry name" value="IG"/>
    <property type="match status" value="2"/>
</dbReference>
<dbReference type="SUPFAM" id="SSF48726">
    <property type="entry name" value="Immunoglobulin"/>
    <property type="match status" value="2"/>
</dbReference>
<dbReference type="PROSITE" id="PS50835">
    <property type="entry name" value="IG_LIKE"/>
    <property type="match status" value="2"/>
</dbReference>
<comment type="function">
    <text evidence="1">Transmembrane protein which can modulate activity of various signaling pathways, probably via binding to integrin ITGAV:ITGB3. Mediates heterophilic cell-cell interactions in vitro.</text>
</comment>
<comment type="subunit">
    <text evidence="1">Homodimer in cis. Does not appear to form trans-homodimers.</text>
</comment>
<comment type="subcellular location">
    <subcellularLocation>
        <location evidence="1">Cell membrane</location>
        <topology evidence="2">Single-pass type I membrane protein</topology>
    </subcellularLocation>
</comment>
<name>MXRA8_XENLA</name>
<accession>Q7T0R0</accession>